<sequence>DSSNLPPNQKQIVD</sequence>
<comment type="subcellular location">
    <subcellularLocation>
        <location evidence="3">Secreted</location>
    </subcellularLocation>
</comment>
<comment type="tissue specificity">
    <text evidence="3">Expressed by the venom gland.</text>
</comment>
<comment type="PTM">
    <text evidence="1">Contains 8 disulfide bonds.</text>
</comment>
<comment type="mass spectrometry"/>
<comment type="miscellaneous">
    <text evidence="3">Not toxic when administered to crickets at doses up to 5 nmol/g.</text>
</comment>
<comment type="similarity">
    <text evidence="2">Belongs to the CRISP family.</text>
</comment>
<keyword id="KW-0903">Direct protein sequencing</keyword>
<keyword id="KW-1015">Disulfide bond</keyword>
<keyword id="KW-0964">Secreted</keyword>
<keyword id="KW-0800">Toxin</keyword>
<feature type="chain" id="PRO_0000231635" description="Cysteine-rich venom protein 23">
    <location>
        <begin position="1"/>
        <end position="14" status="greater than"/>
    </location>
</feature>
<feature type="non-terminal residue" evidence="4">
    <location>
        <position position="14"/>
    </location>
</feature>
<accession>P84804</accession>
<name>CRVPN_NAJHH</name>
<dbReference type="GO" id="GO:0005576">
    <property type="term" value="C:extracellular region"/>
    <property type="evidence" value="ECO:0000314"/>
    <property type="project" value="UniProtKB"/>
</dbReference>
<dbReference type="GO" id="GO:0090729">
    <property type="term" value="F:toxin activity"/>
    <property type="evidence" value="ECO:0007669"/>
    <property type="project" value="UniProtKB-KW"/>
</dbReference>
<dbReference type="GO" id="GO:0006952">
    <property type="term" value="P:defense response"/>
    <property type="evidence" value="ECO:0000314"/>
    <property type="project" value="UniProtKB"/>
</dbReference>
<organism>
    <name type="scientific">Naja haje haje</name>
    <name type="common">Egyptian cobra</name>
    <dbReference type="NCBI Taxonomy" id="8642"/>
    <lineage>
        <taxon>Eukaryota</taxon>
        <taxon>Metazoa</taxon>
        <taxon>Chordata</taxon>
        <taxon>Craniata</taxon>
        <taxon>Vertebrata</taxon>
        <taxon>Euteleostomi</taxon>
        <taxon>Lepidosauria</taxon>
        <taxon>Squamata</taxon>
        <taxon>Bifurcata</taxon>
        <taxon>Unidentata</taxon>
        <taxon>Episquamata</taxon>
        <taxon>Toxicofera</taxon>
        <taxon>Serpentes</taxon>
        <taxon>Colubroidea</taxon>
        <taxon>Elapidae</taxon>
        <taxon>Elapinae</taxon>
        <taxon>Naja</taxon>
    </lineage>
</organism>
<evidence type="ECO:0000250" key="1">
    <source>
        <dbReference type="UniProtKB" id="P84808"/>
    </source>
</evidence>
<evidence type="ECO:0000255" key="2"/>
<evidence type="ECO:0000269" key="3">
    <source>
    </source>
</evidence>
<evidence type="ECO:0000303" key="4">
    <source>
    </source>
</evidence>
<evidence type="ECO:0000305" key="5"/>
<proteinExistence type="evidence at protein level"/>
<protein>
    <recommendedName>
        <fullName>Cysteine-rich venom protein 23</fullName>
    </recommendedName>
    <alternativeName>
        <fullName>CRVP-23h</fullName>
    </alternativeName>
</protein>
<reference evidence="5" key="1">
    <citation type="journal article" date="2005" name="Biochem. Biophys. Res. Commun.">
        <title>Cobra venom contains a pool of cysteine-rich secretory proteins.</title>
        <authorList>
            <person name="Osipov A.V."/>
            <person name="Levashov M.Y."/>
            <person name="Tsetlin V.I."/>
            <person name="Utkin Y.N."/>
        </authorList>
    </citation>
    <scope>PROTEIN SEQUENCE</scope>
    <scope>SUBCELLULAR LOCATION</scope>
    <scope>TISSUE SPECIFICITY</scope>
    <scope>MASS SPECTROMETRY</scope>
    <source>
        <tissue evidence="3">Venom</tissue>
    </source>
</reference>